<proteinExistence type="inferred from homology"/>
<name>RS14Z_PYRAE</name>
<reference key="1">
    <citation type="journal article" date="2002" name="Proc. Natl. Acad. Sci. U.S.A.">
        <title>Genome sequence of the hyperthermophilic crenarchaeon Pyrobaculum aerophilum.</title>
        <authorList>
            <person name="Fitz-Gibbon S.T."/>
            <person name="Ladner H."/>
            <person name="Kim U.-J."/>
            <person name="Stetter K.O."/>
            <person name="Simon M.I."/>
            <person name="Miller J.H."/>
        </authorList>
    </citation>
    <scope>NUCLEOTIDE SEQUENCE [LARGE SCALE GENOMIC DNA]</scope>
    <source>
        <strain>ATCC 51768 / DSM 7523 / JCM 9630 / CIP 104966 / NBRC 100827 / IM2</strain>
    </source>
</reference>
<accession>Q8ZVW1</accession>
<accession>P58732</accession>
<gene>
    <name evidence="1" type="primary">rps14</name>
    <name type="ordered locus">PAE2097</name>
</gene>
<organism>
    <name type="scientific">Pyrobaculum aerophilum (strain ATCC 51768 / DSM 7523 / JCM 9630 / CIP 104966 / NBRC 100827 / IM2)</name>
    <dbReference type="NCBI Taxonomy" id="178306"/>
    <lineage>
        <taxon>Archaea</taxon>
        <taxon>Thermoproteota</taxon>
        <taxon>Thermoprotei</taxon>
        <taxon>Thermoproteales</taxon>
        <taxon>Thermoproteaceae</taxon>
        <taxon>Pyrobaculum</taxon>
    </lineage>
</organism>
<dbReference type="EMBL" id="AE009441">
    <property type="protein sequence ID" value="AAL63943.1"/>
    <property type="molecule type" value="Genomic_DNA"/>
</dbReference>
<dbReference type="RefSeq" id="WP_011008413.1">
    <property type="nucleotide sequence ID" value="NC_003364.1"/>
</dbReference>
<dbReference type="SMR" id="Q8ZVW1"/>
<dbReference type="FunCoup" id="Q8ZVW1">
    <property type="interactions" value="175"/>
</dbReference>
<dbReference type="STRING" id="178306.PAE2097"/>
<dbReference type="EnsemblBacteria" id="AAL63943">
    <property type="protein sequence ID" value="AAL63943"/>
    <property type="gene ID" value="PAE2097"/>
</dbReference>
<dbReference type="GeneID" id="1464275"/>
<dbReference type="KEGG" id="pai:PAE2097"/>
<dbReference type="PATRIC" id="fig|178306.9.peg.1548"/>
<dbReference type="eggNOG" id="arCOG00782">
    <property type="taxonomic scope" value="Archaea"/>
</dbReference>
<dbReference type="HOGENOM" id="CLU_177289_2_2_2"/>
<dbReference type="InParanoid" id="Q8ZVW1"/>
<dbReference type="Proteomes" id="UP000002439">
    <property type="component" value="Chromosome"/>
</dbReference>
<dbReference type="GO" id="GO:0022627">
    <property type="term" value="C:cytosolic small ribosomal subunit"/>
    <property type="evidence" value="ECO:0000318"/>
    <property type="project" value="GO_Central"/>
</dbReference>
<dbReference type="GO" id="GO:0019843">
    <property type="term" value="F:rRNA binding"/>
    <property type="evidence" value="ECO:0007669"/>
    <property type="project" value="UniProtKB-UniRule"/>
</dbReference>
<dbReference type="GO" id="GO:0003735">
    <property type="term" value="F:structural constituent of ribosome"/>
    <property type="evidence" value="ECO:0000318"/>
    <property type="project" value="GO_Central"/>
</dbReference>
<dbReference type="GO" id="GO:0008270">
    <property type="term" value="F:zinc ion binding"/>
    <property type="evidence" value="ECO:0000318"/>
    <property type="project" value="GO_Central"/>
</dbReference>
<dbReference type="GO" id="GO:0002181">
    <property type="term" value="P:cytoplasmic translation"/>
    <property type="evidence" value="ECO:0000318"/>
    <property type="project" value="GO_Central"/>
</dbReference>
<dbReference type="FunFam" id="4.10.830.10:FF:000002">
    <property type="entry name" value="40S ribosomal protein S29"/>
    <property type="match status" value="1"/>
</dbReference>
<dbReference type="Gene3D" id="4.10.830.10">
    <property type="entry name" value="30s Ribosomal Protein S14, Chain N"/>
    <property type="match status" value="1"/>
</dbReference>
<dbReference type="HAMAP" id="MF_01364_A">
    <property type="entry name" value="Ribosomal_uS14_2_A"/>
    <property type="match status" value="1"/>
</dbReference>
<dbReference type="InterPro" id="IPR001209">
    <property type="entry name" value="Ribosomal_uS14"/>
</dbReference>
<dbReference type="InterPro" id="IPR023676">
    <property type="entry name" value="Ribosomal_uS14_arc"/>
</dbReference>
<dbReference type="InterPro" id="IPR018271">
    <property type="entry name" value="Ribosomal_uS14_CS"/>
</dbReference>
<dbReference type="InterPro" id="IPR039744">
    <property type="entry name" value="RIbosomal_uS14_euk_arc"/>
</dbReference>
<dbReference type="InterPro" id="IPR043140">
    <property type="entry name" value="Ribosomal_uS14_sf"/>
</dbReference>
<dbReference type="NCBIfam" id="NF004424">
    <property type="entry name" value="PRK05766.1"/>
    <property type="match status" value="1"/>
</dbReference>
<dbReference type="PANTHER" id="PTHR12010">
    <property type="entry name" value="40S RIBOSOMAL PROTEIN S29"/>
    <property type="match status" value="1"/>
</dbReference>
<dbReference type="PANTHER" id="PTHR12010:SF2">
    <property type="entry name" value="40S RIBOSOMAL PROTEIN S29"/>
    <property type="match status" value="1"/>
</dbReference>
<dbReference type="Pfam" id="PF00253">
    <property type="entry name" value="Ribosomal_S14"/>
    <property type="match status" value="1"/>
</dbReference>
<dbReference type="SUPFAM" id="SSF57716">
    <property type="entry name" value="Glucocorticoid receptor-like (DNA-binding domain)"/>
    <property type="match status" value="1"/>
</dbReference>
<dbReference type="PROSITE" id="PS00527">
    <property type="entry name" value="RIBOSOMAL_S14"/>
    <property type="match status" value="1"/>
</dbReference>
<protein>
    <recommendedName>
        <fullName evidence="1">Small ribosomal subunit protein uS14</fullName>
    </recommendedName>
    <alternativeName>
        <fullName evidence="2">30S ribosomal protein S14 type Z</fullName>
    </alternativeName>
</protein>
<comment type="function">
    <text evidence="1">Binds 16S rRNA, required for the assembly of 30S particles.</text>
</comment>
<comment type="cofactor">
    <cofactor evidence="1">
        <name>Zn(2+)</name>
        <dbReference type="ChEBI" id="CHEBI:29105"/>
    </cofactor>
    <text evidence="1">Binds 1 zinc ion per subunit.</text>
</comment>
<comment type="subunit">
    <text evidence="1">Part of the 30S ribosomal subunit.</text>
</comment>
<comment type="similarity">
    <text evidence="1">Belongs to the universal ribosomal protein uS14 family. Zinc-binding uS14 subfamily.</text>
</comment>
<keyword id="KW-0479">Metal-binding</keyword>
<keyword id="KW-1185">Reference proteome</keyword>
<keyword id="KW-0687">Ribonucleoprotein</keyword>
<keyword id="KW-0689">Ribosomal protein</keyword>
<keyword id="KW-0694">RNA-binding</keyword>
<keyword id="KW-0699">rRNA-binding</keyword>
<keyword id="KW-0862">Zinc</keyword>
<evidence type="ECO:0000255" key="1">
    <source>
        <dbReference type="HAMAP-Rule" id="MF_01364"/>
    </source>
</evidence>
<evidence type="ECO:0000305" key="2"/>
<feature type="chain" id="PRO_0000130996" description="Small ribosomal subunit protein uS14">
    <location>
        <begin position="1"/>
        <end position="54"/>
    </location>
</feature>
<feature type="binding site" evidence="1">
    <location>
        <position position="19"/>
    </location>
    <ligand>
        <name>Zn(2+)</name>
        <dbReference type="ChEBI" id="CHEBI:29105"/>
    </ligand>
</feature>
<feature type="binding site" evidence="1">
    <location>
        <position position="22"/>
    </location>
    <ligand>
        <name>Zn(2+)</name>
        <dbReference type="ChEBI" id="CHEBI:29105"/>
    </ligand>
</feature>
<feature type="binding site" evidence="1">
    <location>
        <position position="37"/>
    </location>
    <ligand>
        <name>Zn(2+)</name>
        <dbReference type="ChEBI" id="CHEBI:29105"/>
    </ligand>
</feature>
<feature type="binding site" evidence="1">
    <location>
        <position position="40"/>
    </location>
    <ligand>
        <name>Zn(2+)</name>
        <dbReference type="ChEBI" id="CHEBI:29105"/>
    </ligand>
</feature>
<sequence>MPSTKPPKERPYGKSKIRCLRCGTREAVIRKYGLYLCRRCFREVAPQLGFKKYY</sequence>